<organism>
    <name type="scientific">Dichapetalum crassifolium</name>
    <dbReference type="NCBI Taxonomy" id="4315"/>
    <lineage>
        <taxon>Eukaryota</taxon>
        <taxon>Viridiplantae</taxon>
        <taxon>Streptophyta</taxon>
        <taxon>Embryophyta</taxon>
        <taxon>Tracheophyta</taxon>
        <taxon>Spermatophyta</taxon>
        <taxon>Magnoliopsida</taxon>
        <taxon>eudicotyledons</taxon>
        <taxon>Gunneridae</taxon>
        <taxon>Pentapetalae</taxon>
        <taxon>rosids</taxon>
        <taxon>fabids</taxon>
        <taxon>Malpighiales</taxon>
        <taxon>Dichapetalaceae</taxon>
        <taxon>Dichapetalum</taxon>
    </lineage>
</organism>
<protein>
    <recommendedName>
        <fullName evidence="1">Ribulose bisphosphate carboxylase large chain</fullName>
        <shortName evidence="1">RuBisCO large subunit</shortName>
        <ecNumber evidence="1">4.1.1.39</ecNumber>
    </recommendedName>
</protein>
<accession>P31184</accession>
<sequence>MSPQTETKASVGFKAGVKEYKLTYYTPDYETKDTDILAAFRVTPQPGVPPEKAGAAVAESSTGTWTTVWTDGFTSLDRYKGRCYHIEPVAGEENQYIAYVAYPLDLFEEGSVTNMFTSIVGNVFGFKALRALRLEDLRIPVAYVKTFQGPPHGIQVERDKLNKYGRPLLGCTIKPKLGLSAKNYGRAVYECLRGGLDFTKDDENVNSQPFMRWRDRFCFCAEALYKAQAETGEIKGHYLNATAGTCEEMIKRAVFARELGVPIVMHDYLTGGFTANTSLAHYCRDNGLLLHXHRAMHAVIDRQKNHGMPFRVLAKALRMSGGDHIHAGTVVGKLEGEREITLGFVDLLRDDFIEKDRSRGIYFTQDWVSLPGVIPVASGGIHVWHMPALTEIFGDDSVLQFGGGTLGHPWGNAPGAVANRVALEACVQARNEGRDLASEGNEIIREAS</sequence>
<feature type="propeptide" id="PRO_0000031201" evidence="1">
    <location>
        <begin position="1"/>
        <end position="2"/>
    </location>
</feature>
<feature type="chain" id="PRO_0000031202" description="Ribulose bisphosphate carboxylase large chain">
    <location>
        <begin position="3"/>
        <end position="448" status="greater than"/>
    </location>
</feature>
<feature type="active site" description="Proton acceptor" evidence="1">
    <location>
        <position position="174"/>
    </location>
</feature>
<feature type="active site" description="Proton acceptor" evidence="1">
    <location>
        <position position="293"/>
    </location>
</feature>
<feature type="binding site" description="in homodimeric partner" evidence="1">
    <location>
        <position position="122"/>
    </location>
    <ligand>
        <name>substrate</name>
    </ligand>
</feature>
<feature type="binding site" evidence="1">
    <location>
        <position position="172"/>
    </location>
    <ligand>
        <name>substrate</name>
    </ligand>
</feature>
<feature type="binding site" evidence="1">
    <location>
        <position position="176"/>
    </location>
    <ligand>
        <name>substrate</name>
    </ligand>
</feature>
<feature type="binding site" description="via carbamate group" evidence="1">
    <location>
        <position position="200"/>
    </location>
    <ligand>
        <name>Mg(2+)</name>
        <dbReference type="ChEBI" id="CHEBI:18420"/>
    </ligand>
</feature>
<feature type="binding site" evidence="1">
    <location>
        <position position="202"/>
    </location>
    <ligand>
        <name>Mg(2+)</name>
        <dbReference type="ChEBI" id="CHEBI:18420"/>
    </ligand>
</feature>
<feature type="binding site" evidence="1">
    <location>
        <position position="203"/>
    </location>
    <ligand>
        <name>Mg(2+)</name>
        <dbReference type="ChEBI" id="CHEBI:18420"/>
    </ligand>
</feature>
<feature type="binding site" evidence="1">
    <location>
        <position position="294"/>
    </location>
    <ligand>
        <name>substrate</name>
    </ligand>
</feature>
<feature type="binding site" evidence="1">
    <location>
        <position position="326"/>
    </location>
    <ligand>
        <name>substrate</name>
    </ligand>
</feature>
<feature type="binding site" evidence="1">
    <location>
        <position position="378"/>
    </location>
    <ligand>
        <name>substrate</name>
    </ligand>
</feature>
<feature type="site" description="Transition state stabilizer" evidence="1">
    <location>
        <position position="333"/>
    </location>
</feature>
<feature type="modified residue" description="N-acetylproline" evidence="1">
    <location>
        <position position="3"/>
    </location>
</feature>
<feature type="modified residue" description="N6,N6,N6-trimethyllysine" evidence="1">
    <location>
        <position position="14"/>
    </location>
</feature>
<feature type="modified residue" description="N6-carboxylysine" evidence="1">
    <location>
        <position position="200"/>
    </location>
</feature>
<feature type="disulfide bond" description="Interchain; in linked form" evidence="1">
    <location>
        <position position="246"/>
    </location>
</feature>
<feature type="non-terminal residue">
    <location>
        <position position="448"/>
    </location>
</feature>
<geneLocation type="chloroplast"/>
<name>RBL_DICCR</name>
<evidence type="ECO:0000255" key="1">
    <source>
        <dbReference type="HAMAP-Rule" id="MF_01338"/>
    </source>
</evidence>
<dbReference type="EC" id="4.1.1.39" evidence="1"/>
<dbReference type="EMBL" id="X69733">
    <property type="protein sequence ID" value="CAA49388.1"/>
    <property type="molecule type" value="Genomic_DNA"/>
</dbReference>
<dbReference type="PIR" id="S31546">
    <property type="entry name" value="S31546"/>
</dbReference>
<dbReference type="GO" id="GO:0009507">
    <property type="term" value="C:chloroplast"/>
    <property type="evidence" value="ECO:0007669"/>
    <property type="project" value="UniProtKB-SubCell"/>
</dbReference>
<dbReference type="GO" id="GO:0000287">
    <property type="term" value="F:magnesium ion binding"/>
    <property type="evidence" value="ECO:0007669"/>
    <property type="project" value="InterPro"/>
</dbReference>
<dbReference type="GO" id="GO:0004497">
    <property type="term" value="F:monooxygenase activity"/>
    <property type="evidence" value="ECO:0007669"/>
    <property type="project" value="UniProtKB-KW"/>
</dbReference>
<dbReference type="GO" id="GO:0016984">
    <property type="term" value="F:ribulose-bisphosphate carboxylase activity"/>
    <property type="evidence" value="ECO:0007669"/>
    <property type="project" value="UniProtKB-EC"/>
</dbReference>
<dbReference type="GO" id="GO:0009853">
    <property type="term" value="P:photorespiration"/>
    <property type="evidence" value="ECO:0007669"/>
    <property type="project" value="UniProtKB-KW"/>
</dbReference>
<dbReference type="GO" id="GO:0019253">
    <property type="term" value="P:reductive pentose-phosphate cycle"/>
    <property type="evidence" value="ECO:0007669"/>
    <property type="project" value="UniProtKB-KW"/>
</dbReference>
<dbReference type="CDD" id="cd08212">
    <property type="entry name" value="RuBisCO_large_I"/>
    <property type="match status" value="1"/>
</dbReference>
<dbReference type="FunFam" id="3.20.20.110:FF:000003">
    <property type="entry name" value="Ribulose bisphosphate carboxylase large chain"/>
    <property type="match status" value="1"/>
</dbReference>
<dbReference type="FunFam" id="3.30.70.150:FF:000001">
    <property type="entry name" value="Ribulose bisphosphate carboxylase large chain"/>
    <property type="match status" value="1"/>
</dbReference>
<dbReference type="Gene3D" id="3.20.20.110">
    <property type="entry name" value="Ribulose bisphosphate carboxylase, large subunit, C-terminal domain"/>
    <property type="match status" value="1"/>
</dbReference>
<dbReference type="Gene3D" id="3.30.70.150">
    <property type="entry name" value="RuBisCO large subunit, N-terminal domain"/>
    <property type="match status" value="1"/>
</dbReference>
<dbReference type="HAMAP" id="MF_01338">
    <property type="entry name" value="RuBisCO_L_type1"/>
    <property type="match status" value="1"/>
</dbReference>
<dbReference type="InterPro" id="IPR033966">
    <property type="entry name" value="RuBisCO"/>
</dbReference>
<dbReference type="InterPro" id="IPR020878">
    <property type="entry name" value="RuBisCo_large_chain_AS"/>
</dbReference>
<dbReference type="InterPro" id="IPR000685">
    <property type="entry name" value="RuBisCO_lsu_C"/>
</dbReference>
<dbReference type="InterPro" id="IPR036376">
    <property type="entry name" value="RuBisCO_lsu_C_sf"/>
</dbReference>
<dbReference type="InterPro" id="IPR017443">
    <property type="entry name" value="RuBisCO_lsu_fd_N"/>
</dbReference>
<dbReference type="InterPro" id="IPR036422">
    <property type="entry name" value="RuBisCO_lsu_N_sf"/>
</dbReference>
<dbReference type="InterPro" id="IPR020888">
    <property type="entry name" value="RuBisCO_lsuI"/>
</dbReference>
<dbReference type="NCBIfam" id="NF003252">
    <property type="entry name" value="PRK04208.1"/>
    <property type="match status" value="1"/>
</dbReference>
<dbReference type="PANTHER" id="PTHR42704">
    <property type="entry name" value="RIBULOSE BISPHOSPHATE CARBOXYLASE"/>
    <property type="match status" value="1"/>
</dbReference>
<dbReference type="PANTHER" id="PTHR42704:SF15">
    <property type="entry name" value="RIBULOSE BISPHOSPHATE CARBOXYLASE LARGE CHAIN"/>
    <property type="match status" value="1"/>
</dbReference>
<dbReference type="Pfam" id="PF00016">
    <property type="entry name" value="RuBisCO_large"/>
    <property type="match status" value="1"/>
</dbReference>
<dbReference type="Pfam" id="PF02788">
    <property type="entry name" value="RuBisCO_large_N"/>
    <property type="match status" value="1"/>
</dbReference>
<dbReference type="SFLD" id="SFLDG01052">
    <property type="entry name" value="RuBisCO"/>
    <property type="match status" value="1"/>
</dbReference>
<dbReference type="SFLD" id="SFLDS00014">
    <property type="entry name" value="RuBisCO"/>
    <property type="match status" value="1"/>
</dbReference>
<dbReference type="SFLD" id="SFLDG00301">
    <property type="entry name" value="RuBisCO-like_proteins"/>
    <property type="match status" value="1"/>
</dbReference>
<dbReference type="SUPFAM" id="SSF51649">
    <property type="entry name" value="RuBisCo, C-terminal domain"/>
    <property type="match status" value="1"/>
</dbReference>
<dbReference type="SUPFAM" id="SSF54966">
    <property type="entry name" value="RuBisCO, large subunit, small (N-terminal) domain"/>
    <property type="match status" value="1"/>
</dbReference>
<dbReference type="PROSITE" id="PS00157">
    <property type="entry name" value="RUBISCO_LARGE"/>
    <property type="match status" value="1"/>
</dbReference>
<comment type="function">
    <text evidence="1">RuBisCO catalyzes two reactions: the carboxylation of D-ribulose 1,5-bisphosphate, the primary event in carbon dioxide fixation, as well as the oxidative fragmentation of the pentose substrate in the photorespiration process. Both reactions occur simultaneously and in competition at the same active site.</text>
</comment>
<comment type="catalytic activity">
    <reaction evidence="1">
        <text>2 (2R)-3-phosphoglycerate + 2 H(+) = D-ribulose 1,5-bisphosphate + CO2 + H2O</text>
        <dbReference type="Rhea" id="RHEA:23124"/>
        <dbReference type="ChEBI" id="CHEBI:15377"/>
        <dbReference type="ChEBI" id="CHEBI:15378"/>
        <dbReference type="ChEBI" id="CHEBI:16526"/>
        <dbReference type="ChEBI" id="CHEBI:57870"/>
        <dbReference type="ChEBI" id="CHEBI:58272"/>
        <dbReference type="EC" id="4.1.1.39"/>
    </reaction>
</comment>
<comment type="catalytic activity">
    <reaction evidence="1">
        <text>D-ribulose 1,5-bisphosphate + O2 = 2-phosphoglycolate + (2R)-3-phosphoglycerate + 2 H(+)</text>
        <dbReference type="Rhea" id="RHEA:36631"/>
        <dbReference type="ChEBI" id="CHEBI:15378"/>
        <dbReference type="ChEBI" id="CHEBI:15379"/>
        <dbReference type="ChEBI" id="CHEBI:57870"/>
        <dbReference type="ChEBI" id="CHEBI:58033"/>
        <dbReference type="ChEBI" id="CHEBI:58272"/>
    </reaction>
</comment>
<comment type="cofactor">
    <cofactor evidence="1">
        <name>Mg(2+)</name>
        <dbReference type="ChEBI" id="CHEBI:18420"/>
    </cofactor>
    <text evidence="1">Binds 1 Mg(2+) ion per subunit.</text>
</comment>
<comment type="subunit">
    <text evidence="1">Heterohexadecamer of 8 large chains and 8 small chains; disulfide-linked. The disulfide link is formed within the large subunit homodimers.</text>
</comment>
<comment type="subcellular location">
    <subcellularLocation>
        <location>Plastid</location>
        <location>Chloroplast</location>
    </subcellularLocation>
</comment>
<comment type="PTM">
    <text evidence="1">The disulfide bond which can form in the large chain dimeric partners within the hexadecamer appears to be associated with oxidative stress and protein turnover.</text>
</comment>
<comment type="miscellaneous">
    <text evidence="1">The basic functional RuBisCO is composed of a large chain homodimer in a 'head-to-tail' conformation. In form I RuBisCO this homodimer is arranged in a barrel-like tetramer with the small subunits forming a tetrameric 'cap' on each end of the 'barrel'.</text>
</comment>
<comment type="similarity">
    <text evidence="1">Belongs to the RuBisCO large chain family. Type I subfamily.</text>
</comment>
<keyword id="KW-0007">Acetylation</keyword>
<keyword id="KW-0113">Calvin cycle</keyword>
<keyword id="KW-0120">Carbon dioxide fixation</keyword>
<keyword id="KW-0150">Chloroplast</keyword>
<keyword id="KW-1015">Disulfide bond</keyword>
<keyword id="KW-0456">Lyase</keyword>
<keyword id="KW-0460">Magnesium</keyword>
<keyword id="KW-0479">Metal-binding</keyword>
<keyword id="KW-0488">Methylation</keyword>
<keyword id="KW-0503">Monooxygenase</keyword>
<keyword id="KW-0560">Oxidoreductase</keyword>
<keyword id="KW-0601">Photorespiration</keyword>
<keyword id="KW-0602">Photosynthesis</keyword>
<keyword id="KW-0934">Plastid</keyword>
<proteinExistence type="inferred from homology"/>
<gene>
    <name evidence="1" type="primary">rbcL</name>
</gene>
<reference key="1">
    <citation type="submission" date="1995-04" db="EMBL/GenBank/DDBJ databases">
        <authorList>
            <person name="Savolainen V."/>
        </authorList>
    </citation>
    <scope>NUCLEOTIDE SEQUENCE [GENOMIC DNA]</scope>
    <source>
        <strain>Sample DCR1</strain>
    </source>
</reference>
<reference key="2">
    <citation type="journal article" date="1994" name="Mol. Phylogenet. Evol.">
        <title>Molecular phylogeny of families related to Celastrales based on rbcL 5' flanking sequences.</title>
        <authorList>
            <person name="Savolainen V."/>
            <person name="Manen J.F."/>
            <person name="Douzery E.J.P."/>
            <person name="Spichiger R."/>
        </authorList>
    </citation>
    <scope>NUCLEOTIDE SEQUENCE [GENOMIC DNA] OF 1-50</scope>
    <source>
        <strain>Sample DCR1</strain>
    </source>
</reference>